<proteinExistence type="inferred from homology"/>
<protein>
    <recommendedName>
        <fullName evidence="1">Ribonuclease PH</fullName>
        <shortName evidence="1">RNase PH</shortName>
        <ecNumber evidence="1">2.7.7.56</ecNumber>
    </recommendedName>
    <alternativeName>
        <fullName evidence="1">tRNA nucleotidyltransferase</fullName>
    </alternativeName>
</protein>
<organism>
    <name type="scientific">Photorhabdus laumondii subsp. laumondii (strain DSM 15139 / CIP 105565 / TT01)</name>
    <name type="common">Photorhabdus luminescens subsp. laumondii</name>
    <dbReference type="NCBI Taxonomy" id="243265"/>
    <lineage>
        <taxon>Bacteria</taxon>
        <taxon>Pseudomonadati</taxon>
        <taxon>Pseudomonadota</taxon>
        <taxon>Gammaproteobacteria</taxon>
        <taxon>Enterobacterales</taxon>
        <taxon>Morganellaceae</taxon>
        <taxon>Photorhabdus</taxon>
    </lineage>
</organism>
<evidence type="ECO:0000255" key="1">
    <source>
        <dbReference type="HAMAP-Rule" id="MF_00564"/>
    </source>
</evidence>
<sequence>MRPTGRAAEQVRPITITRHYTKHAEGSVLVEFGDTKVLCNASVEEGVPRFLKGQGQGWVTAEYGMLPRSTHTRNAREAARGKQGGRTMEIQRLIARSLRAAVDLKKLGEYTITLDCDVIQADGGTRTASITGACVALVDALNKIVEAGKLKESPLKSMVAAVSVGIVDGEGRCDLEYVEDSAAETDMNVVMMEDGRMIEVQGTAEGEPFSHDELLSLLALAKGGLEDIFDAQRNALKQNALK</sequence>
<gene>
    <name evidence="1" type="primary">rph</name>
    <name type="ordered locus">plu4870</name>
</gene>
<comment type="function">
    <text evidence="1">Phosphorolytic 3'-5' exoribonuclease that plays an important role in tRNA 3'-end maturation. Removes nucleotide residues following the 3'-CCA terminus of tRNAs; can also add nucleotides to the ends of RNA molecules by using nucleoside diphosphates as substrates, but this may not be physiologically important. Probably plays a role in initiation of 16S rRNA degradation (leading to ribosome degradation) during starvation.</text>
</comment>
<comment type="catalytic activity">
    <reaction evidence="1">
        <text>tRNA(n+1) + phosphate = tRNA(n) + a ribonucleoside 5'-diphosphate</text>
        <dbReference type="Rhea" id="RHEA:10628"/>
        <dbReference type="Rhea" id="RHEA-COMP:17343"/>
        <dbReference type="Rhea" id="RHEA-COMP:17344"/>
        <dbReference type="ChEBI" id="CHEBI:43474"/>
        <dbReference type="ChEBI" id="CHEBI:57930"/>
        <dbReference type="ChEBI" id="CHEBI:173114"/>
        <dbReference type="EC" id="2.7.7.56"/>
    </reaction>
</comment>
<comment type="subunit">
    <text evidence="1">Homohexameric ring arranged as a trimer of dimers.</text>
</comment>
<comment type="similarity">
    <text evidence="1">Belongs to the RNase PH family.</text>
</comment>
<reference key="1">
    <citation type="journal article" date="2003" name="Nat. Biotechnol.">
        <title>The genome sequence of the entomopathogenic bacterium Photorhabdus luminescens.</title>
        <authorList>
            <person name="Duchaud E."/>
            <person name="Rusniok C."/>
            <person name="Frangeul L."/>
            <person name="Buchrieser C."/>
            <person name="Givaudan A."/>
            <person name="Taourit S."/>
            <person name="Bocs S."/>
            <person name="Boursaux-Eude C."/>
            <person name="Chandler M."/>
            <person name="Charles J.-F."/>
            <person name="Dassa E."/>
            <person name="Derose R."/>
            <person name="Derzelle S."/>
            <person name="Freyssinet G."/>
            <person name="Gaudriault S."/>
            <person name="Medigue C."/>
            <person name="Lanois A."/>
            <person name="Powell K."/>
            <person name="Siguier P."/>
            <person name="Vincent R."/>
            <person name="Wingate V."/>
            <person name="Zouine M."/>
            <person name="Glaser P."/>
            <person name="Boemare N."/>
            <person name="Danchin A."/>
            <person name="Kunst F."/>
        </authorList>
    </citation>
    <scope>NUCLEOTIDE SEQUENCE [LARGE SCALE GENOMIC DNA]</scope>
    <source>
        <strain>DSM 15139 / CIP 105565 / TT01</strain>
    </source>
</reference>
<feature type="chain" id="PRO_0000139920" description="Ribonuclease PH">
    <location>
        <begin position="1"/>
        <end position="242"/>
    </location>
</feature>
<feature type="binding site" evidence="1">
    <location>
        <position position="86"/>
    </location>
    <ligand>
        <name>phosphate</name>
        <dbReference type="ChEBI" id="CHEBI:43474"/>
        <note>substrate</note>
    </ligand>
</feature>
<feature type="binding site" evidence="1">
    <location>
        <begin position="124"/>
        <end position="126"/>
    </location>
    <ligand>
        <name>phosphate</name>
        <dbReference type="ChEBI" id="CHEBI:43474"/>
        <note>substrate</note>
    </ligand>
</feature>
<keyword id="KW-0548">Nucleotidyltransferase</keyword>
<keyword id="KW-1185">Reference proteome</keyword>
<keyword id="KW-0694">RNA-binding</keyword>
<keyword id="KW-0698">rRNA processing</keyword>
<keyword id="KW-0808">Transferase</keyword>
<keyword id="KW-0819">tRNA processing</keyword>
<keyword id="KW-0820">tRNA-binding</keyword>
<accession>Q7MAX2</accession>
<name>RNPH_PHOLL</name>
<dbReference type="EC" id="2.7.7.56" evidence="1"/>
<dbReference type="EMBL" id="BX571875">
    <property type="protein sequence ID" value="CAE17242.1"/>
    <property type="molecule type" value="Genomic_DNA"/>
</dbReference>
<dbReference type="RefSeq" id="WP_011148927.1">
    <property type="nucleotide sequence ID" value="NC_005126.1"/>
</dbReference>
<dbReference type="SMR" id="Q7MAX2"/>
<dbReference type="STRING" id="243265.plu4870"/>
<dbReference type="GeneID" id="48851099"/>
<dbReference type="KEGG" id="plu:plu4870"/>
<dbReference type="eggNOG" id="COG0689">
    <property type="taxonomic scope" value="Bacteria"/>
</dbReference>
<dbReference type="HOGENOM" id="CLU_050858_0_0_6"/>
<dbReference type="OrthoDB" id="9802265at2"/>
<dbReference type="Proteomes" id="UP000002514">
    <property type="component" value="Chromosome"/>
</dbReference>
<dbReference type="GO" id="GO:0000175">
    <property type="term" value="F:3'-5'-RNA exonuclease activity"/>
    <property type="evidence" value="ECO:0007669"/>
    <property type="project" value="UniProtKB-UniRule"/>
</dbReference>
<dbReference type="GO" id="GO:0000049">
    <property type="term" value="F:tRNA binding"/>
    <property type="evidence" value="ECO:0007669"/>
    <property type="project" value="UniProtKB-UniRule"/>
</dbReference>
<dbReference type="GO" id="GO:0009022">
    <property type="term" value="F:tRNA nucleotidyltransferase activity"/>
    <property type="evidence" value="ECO:0007669"/>
    <property type="project" value="UniProtKB-UniRule"/>
</dbReference>
<dbReference type="GO" id="GO:0016075">
    <property type="term" value="P:rRNA catabolic process"/>
    <property type="evidence" value="ECO:0007669"/>
    <property type="project" value="UniProtKB-UniRule"/>
</dbReference>
<dbReference type="GO" id="GO:0006364">
    <property type="term" value="P:rRNA processing"/>
    <property type="evidence" value="ECO:0007669"/>
    <property type="project" value="UniProtKB-KW"/>
</dbReference>
<dbReference type="GO" id="GO:0008033">
    <property type="term" value="P:tRNA processing"/>
    <property type="evidence" value="ECO:0007669"/>
    <property type="project" value="UniProtKB-UniRule"/>
</dbReference>
<dbReference type="CDD" id="cd11362">
    <property type="entry name" value="RNase_PH_bact"/>
    <property type="match status" value="1"/>
</dbReference>
<dbReference type="FunFam" id="3.30.230.70:FF:000003">
    <property type="entry name" value="Ribonuclease PH"/>
    <property type="match status" value="1"/>
</dbReference>
<dbReference type="Gene3D" id="3.30.230.70">
    <property type="entry name" value="GHMP Kinase, N-terminal domain"/>
    <property type="match status" value="1"/>
</dbReference>
<dbReference type="HAMAP" id="MF_00564">
    <property type="entry name" value="RNase_PH"/>
    <property type="match status" value="1"/>
</dbReference>
<dbReference type="InterPro" id="IPR001247">
    <property type="entry name" value="ExoRNase_PH_dom1"/>
</dbReference>
<dbReference type="InterPro" id="IPR015847">
    <property type="entry name" value="ExoRNase_PH_dom2"/>
</dbReference>
<dbReference type="InterPro" id="IPR036345">
    <property type="entry name" value="ExoRNase_PH_dom2_sf"/>
</dbReference>
<dbReference type="InterPro" id="IPR027408">
    <property type="entry name" value="PNPase/RNase_PH_dom_sf"/>
</dbReference>
<dbReference type="InterPro" id="IPR020568">
    <property type="entry name" value="Ribosomal_Su5_D2-typ_SF"/>
</dbReference>
<dbReference type="InterPro" id="IPR050080">
    <property type="entry name" value="RNase_PH"/>
</dbReference>
<dbReference type="InterPro" id="IPR002381">
    <property type="entry name" value="RNase_PH_bac-type"/>
</dbReference>
<dbReference type="InterPro" id="IPR018336">
    <property type="entry name" value="RNase_PH_CS"/>
</dbReference>
<dbReference type="NCBIfam" id="TIGR01966">
    <property type="entry name" value="RNasePH"/>
    <property type="match status" value="1"/>
</dbReference>
<dbReference type="PANTHER" id="PTHR11953">
    <property type="entry name" value="EXOSOME COMPLEX COMPONENT"/>
    <property type="match status" value="1"/>
</dbReference>
<dbReference type="PANTHER" id="PTHR11953:SF0">
    <property type="entry name" value="EXOSOME COMPLEX COMPONENT RRP41"/>
    <property type="match status" value="1"/>
</dbReference>
<dbReference type="Pfam" id="PF01138">
    <property type="entry name" value="RNase_PH"/>
    <property type="match status" value="1"/>
</dbReference>
<dbReference type="Pfam" id="PF03725">
    <property type="entry name" value="RNase_PH_C"/>
    <property type="match status" value="1"/>
</dbReference>
<dbReference type="SUPFAM" id="SSF55666">
    <property type="entry name" value="Ribonuclease PH domain 2-like"/>
    <property type="match status" value="1"/>
</dbReference>
<dbReference type="SUPFAM" id="SSF54211">
    <property type="entry name" value="Ribosomal protein S5 domain 2-like"/>
    <property type="match status" value="1"/>
</dbReference>
<dbReference type="PROSITE" id="PS01277">
    <property type="entry name" value="RIBONUCLEASE_PH"/>
    <property type="match status" value="1"/>
</dbReference>